<name>GALS_SALTY</name>
<evidence type="ECO:0000250" key="1"/>
<evidence type="ECO:0000255" key="2">
    <source>
        <dbReference type="PROSITE-ProRule" id="PRU00111"/>
    </source>
</evidence>
<gene>
    <name type="primary">galS</name>
    <name type="ordered locus">STM2191</name>
</gene>
<keyword id="KW-0238">DNA-binding</keyword>
<keyword id="KW-1185">Reference proteome</keyword>
<keyword id="KW-0678">Repressor</keyword>
<keyword id="KW-0804">Transcription</keyword>
<keyword id="KW-0805">Transcription regulation</keyword>
<organism>
    <name type="scientific">Salmonella typhimurium (strain LT2 / SGSC1412 / ATCC 700720)</name>
    <dbReference type="NCBI Taxonomy" id="99287"/>
    <lineage>
        <taxon>Bacteria</taxon>
        <taxon>Pseudomonadati</taxon>
        <taxon>Pseudomonadota</taxon>
        <taxon>Gammaproteobacteria</taxon>
        <taxon>Enterobacterales</taxon>
        <taxon>Enterobacteriaceae</taxon>
        <taxon>Salmonella</taxon>
    </lineage>
</organism>
<proteinExistence type="inferred from homology"/>
<reference key="1">
    <citation type="journal article" date="2001" name="Nature">
        <title>Complete genome sequence of Salmonella enterica serovar Typhimurium LT2.</title>
        <authorList>
            <person name="McClelland M."/>
            <person name="Sanderson K.E."/>
            <person name="Spieth J."/>
            <person name="Clifton S.W."/>
            <person name="Latreille P."/>
            <person name="Courtney L."/>
            <person name="Porwollik S."/>
            <person name="Ali J."/>
            <person name="Dante M."/>
            <person name="Du F."/>
            <person name="Hou S."/>
            <person name="Layman D."/>
            <person name="Leonard S."/>
            <person name="Nguyen C."/>
            <person name="Scott K."/>
            <person name="Holmes A."/>
            <person name="Grewal N."/>
            <person name="Mulvaney E."/>
            <person name="Ryan E."/>
            <person name="Sun H."/>
            <person name="Florea L."/>
            <person name="Miller W."/>
            <person name="Stoneking T."/>
            <person name="Nhan M."/>
            <person name="Waterston R."/>
            <person name="Wilson R.K."/>
        </authorList>
    </citation>
    <scope>NUCLEOTIDE SEQUENCE [LARGE SCALE GENOMIC DNA]</scope>
    <source>
        <strain>LT2 / SGSC1412 / ATCC 700720</strain>
    </source>
</reference>
<reference key="2">
    <citation type="journal article" date="1988" name="Mol. Gen. Genet.">
        <title>The mglB sequence of Salmonella typhimurium LT2; promoter analysis by gene fusions and evidence for a divergently oriented gene coding for the mgl repressor.</title>
        <authorList>
            <person name="Benner-Luger D."/>
            <person name="Boos W."/>
        </authorList>
    </citation>
    <scope>NUCLEOTIDE SEQUENCE [GENOMIC DNA] OF 323-340</scope>
    <source>
        <strain>LT2</strain>
    </source>
</reference>
<sequence>MITIRDVARQAGVSVATVSRVLNNSALVSPDTRDAVMQAVTLLGYRPNANAQALATQVSDTIGVVVMDVSDAFFGALVKAVDLVAQQHQKYVLIGNSYHEAEKERHAIEVLIRQRCNALIVHSKALTDRELSDFMDQIPGMVLINRIVPGYAHRCVCLDNVSGARMATRMLLNNGHQRIGYLASSHRIEDDAMRREGWLHALQEQGIAASESWIGTGTPDMQGGESAMVELLGRNLQLTAVFAYNDNMAAGALTALKDNGIAIPLHLSVIGFDDIPIARYTDPQLTTVRYPIASMAKIATELALQGAAGTLDITATHCFMPTLVRRHSVAWRQNAVLITN</sequence>
<comment type="function">
    <text evidence="1">Repressor of the mgl operon. Binds galactose and D-fucose as inducers. GalS binds to an operator DNA sequence within its own coding sequence (By similarity).</text>
</comment>
<comment type="subunit">
    <text evidence="1">Homodimer.</text>
</comment>
<protein>
    <recommendedName>
        <fullName>HTH-type transcriptional regulator GalS</fullName>
    </recommendedName>
    <alternativeName>
        <fullName>Mgl repressor and galactose ultrainduction factor</fullName>
    </alternativeName>
</protein>
<dbReference type="EMBL" id="AE006468">
    <property type="protein sequence ID" value="AAL21095.1"/>
    <property type="molecule type" value="Genomic_DNA"/>
</dbReference>
<dbReference type="RefSeq" id="NP_461136.1">
    <property type="nucleotide sequence ID" value="NC_003197.2"/>
</dbReference>
<dbReference type="RefSeq" id="WP_000628631.1">
    <property type="nucleotide sequence ID" value="NC_003197.2"/>
</dbReference>
<dbReference type="SMR" id="P41030"/>
<dbReference type="STRING" id="99287.STM2191"/>
<dbReference type="PaxDb" id="99287-STM2191"/>
<dbReference type="GeneID" id="1253713"/>
<dbReference type="KEGG" id="stm:STM2191"/>
<dbReference type="PATRIC" id="fig|99287.12.peg.2318"/>
<dbReference type="HOGENOM" id="CLU_037628_6_1_6"/>
<dbReference type="OMA" id="FFAEPYF"/>
<dbReference type="PhylomeDB" id="P41030"/>
<dbReference type="BioCyc" id="SENT99287:STM2191-MONOMER"/>
<dbReference type="Proteomes" id="UP000001014">
    <property type="component" value="Chromosome"/>
</dbReference>
<dbReference type="GO" id="GO:0003700">
    <property type="term" value="F:DNA-binding transcription factor activity"/>
    <property type="evidence" value="ECO:0000318"/>
    <property type="project" value="GO_Central"/>
</dbReference>
<dbReference type="GO" id="GO:0000976">
    <property type="term" value="F:transcription cis-regulatory region binding"/>
    <property type="evidence" value="ECO:0000318"/>
    <property type="project" value="GO_Central"/>
</dbReference>
<dbReference type="GO" id="GO:0006355">
    <property type="term" value="P:regulation of DNA-templated transcription"/>
    <property type="evidence" value="ECO:0000318"/>
    <property type="project" value="GO_Central"/>
</dbReference>
<dbReference type="CDD" id="cd01392">
    <property type="entry name" value="HTH_LacI"/>
    <property type="match status" value="1"/>
</dbReference>
<dbReference type="CDD" id="cd06270">
    <property type="entry name" value="PBP1_GalS-like"/>
    <property type="match status" value="1"/>
</dbReference>
<dbReference type="FunFam" id="3.40.50.2300:FF:000048">
    <property type="entry name" value="HTH-type transcriptional regulator GalR"/>
    <property type="match status" value="1"/>
</dbReference>
<dbReference type="Gene3D" id="3.40.50.2300">
    <property type="match status" value="2"/>
</dbReference>
<dbReference type="Gene3D" id="1.10.260.40">
    <property type="entry name" value="lambda repressor-like DNA-binding domains"/>
    <property type="match status" value="1"/>
</dbReference>
<dbReference type="InterPro" id="IPR000843">
    <property type="entry name" value="HTH_LacI"/>
</dbReference>
<dbReference type="InterPro" id="IPR046335">
    <property type="entry name" value="LacI/GalR-like_sensor"/>
</dbReference>
<dbReference type="InterPro" id="IPR010982">
    <property type="entry name" value="Lambda_DNA-bd_dom_sf"/>
</dbReference>
<dbReference type="InterPro" id="IPR028082">
    <property type="entry name" value="Peripla_BP_I"/>
</dbReference>
<dbReference type="NCBIfam" id="NF007706">
    <property type="entry name" value="PRK10401.1"/>
    <property type="match status" value="1"/>
</dbReference>
<dbReference type="PANTHER" id="PTHR30146:SF109">
    <property type="entry name" value="HTH-TYPE TRANSCRIPTIONAL REGULATOR GALS"/>
    <property type="match status" value="1"/>
</dbReference>
<dbReference type="PANTHER" id="PTHR30146">
    <property type="entry name" value="LACI-RELATED TRANSCRIPTIONAL REPRESSOR"/>
    <property type="match status" value="1"/>
</dbReference>
<dbReference type="Pfam" id="PF00356">
    <property type="entry name" value="LacI"/>
    <property type="match status" value="1"/>
</dbReference>
<dbReference type="Pfam" id="PF13377">
    <property type="entry name" value="Peripla_BP_3"/>
    <property type="match status" value="1"/>
</dbReference>
<dbReference type="PRINTS" id="PR00036">
    <property type="entry name" value="HTHLACI"/>
</dbReference>
<dbReference type="SMART" id="SM00354">
    <property type="entry name" value="HTH_LACI"/>
    <property type="match status" value="1"/>
</dbReference>
<dbReference type="SUPFAM" id="SSF47413">
    <property type="entry name" value="lambda repressor-like DNA-binding domains"/>
    <property type="match status" value="1"/>
</dbReference>
<dbReference type="SUPFAM" id="SSF53822">
    <property type="entry name" value="Periplasmic binding protein-like I"/>
    <property type="match status" value="1"/>
</dbReference>
<dbReference type="PROSITE" id="PS00356">
    <property type="entry name" value="HTH_LACI_1"/>
    <property type="match status" value="1"/>
</dbReference>
<dbReference type="PROSITE" id="PS50932">
    <property type="entry name" value="HTH_LACI_2"/>
    <property type="match status" value="1"/>
</dbReference>
<accession>P41030</accession>
<feature type="chain" id="PRO_0000107957" description="HTH-type transcriptional regulator GalS">
    <location>
        <begin position="1"/>
        <end position="340"/>
    </location>
</feature>
<feature type="domain" description="HTH lacI-type" evidence="2">
    <location>
        <begin position="1"/>
        <end position="56"/>
    </location>
</feature>
<feature type="DNA-binding region" description="H-T-H motif" evidence="2">
    <location>
        <begin position="4"/>
        <end position="23"/>
    </location>
</feature>